<evidence type="ECO:0000250" key="1">
    <source>
        <dbReference type="UniProtKB" id="P62483"/>
    </source>
</evidence>
<evidence type="ECO:0000250" key="2">
    <source>
        <dbReference type="UniProtKB" id="P63144"/>
    </source>
</evidence>
<evidence type="ECO:0000256" key="3">
    <source>
        <dbReference type="SAM" id="MobiDB-lite"/>
    </source>
</evidence>
<evidence type="ECO:0000269" key="4">
    <source>
    </source>
</evidence>
<evidence type="ECO:0000269" key="5">
    <source>
    </source>
</evidence>
<evidence type="ECO:0000269" key="6">
    <source>
    </source>
</evidence>
<evidence type="ECO:0000269" key="7">
    <source>
    </source>
</evidence>
<evidence type="ECO:0000269" key="8">
    <source>
    </source>
</evidence>
<evidence type="ECO:0000269" key="9">
    <source>
    </source>
</evidence>
<evidence type="ECO:0000269" key="10">
    <source>
    </source>
</evidence>
<evidence type="ECO:0000269" key="11">
    <source>
    </source>
</evidence>
<evidence type="ECO:0000269" key="12">
    <source>
    </source>
</evidence>
<evidence type="ECO:0000269" key="13">
    <source>
    </source>
</evidence>
<evidence type="ECO:0000269" key="14">
    <source>
    </source>
</evidence>
<evidence type="ECO:0000269" key="15">
    <source>
    </source>
</evidence>
<evidence type="ECO:0000269" key="16">
    <source>
    </source>
</evidence>
<evidence type="ECO:0000303" key="17">
    <source>
    </source>
</evidence>
<evidence type="ECO:0000303" key="18">
    <source>
    </source>
</evidence>
<evidence type="ECO:0000303" key="19">
    <source>
    </source>
</evidence>
<evidence type="ECO:0000303" key="20">
    <source>
    </source>
</evidence>
<evidence type="ECO:0000303" key="21">
    <source>
    </source>
</evidence>
<evidence type="ECO:0000303" key="22">
    <source>
    </source>
</evidence>
<evidence type="ECO:0000303" key="23">
    <source>
    </source>
</evidence>
<evidence type="ECO:0000305" key="24"/>
<evidence type="ECO:0000312" key="25">
    <source>
        <dbReference type="HGNC" id="HGNC:6228"/>
    </source>
</evidence>
<proteinExistence type="evidence at protein level"/>
<gene>
    <name evidence="25" type="primary">KCNAB1</name>
    <name type="synonym">KCNA1B</name>
</gene>
<reference key="1">
    <citation type="journal article" date="1995" name="J. Biol. Chem.">
        <title>A novel K+ channel beta-subunit (hKv beta 1.3) is produced via alternative mRNA splicing.</title>
        <authorList>
            <person name="England S.K."/>
            <person name="Uebele V.N."/>
            <person name="Kodali J."/>
            <person name="Bennett P.B."/>
            <person name="Tamkun M.M."/>
        </authorList>
    </citation>
    <scope>NUCLEOTIDE SEQUENCE [MRNA] (ISOFORM KVB1.3)</scope>
    <scope>FUNCTION</scope>
    <source>
        <tissue>Heart left ventricle</tissue>
    </source>
</reference>
<reference key="2">
    <citation type="journal article" date="1995" name="FEBS Lett.">
        <title>Molecular cloning and functional expression of a novel potassium channel beta-subunit from human atrium.</title>
        <authorList>
            <person name="Majumder K."/>
            <person name="De Biasi M."/>
            <person name="Wang Z."/>
            <person name="Wible B.A."/>
        </authorList>
    </citation>
    <scope>NUCLEOTIDE SEQUENCE [MRNA] (ISOFORM KVB1.2)</scope>
    <source>
        <tissue>Heart atrium</tissue>
    </source>
</reference>
<reference key="3">
    <citation type="journal article" date="1995" name="Proc. Natl. Acad. Sci. U.S.A.">
        <title>Characterization of a voltage-gated K+ channel beta subunit expressed in human heart.</title>
        <authorList>
            <person name="England S.K."/>
            <person name="Uebele V.N."/>
            <person name="Shear H."/>
            <person name="Kodali J."/>
            <person name="Bennett P.B."/>
            <person name="Tamkun M.M."/>
        </authorList>
    </citation>
    <scope>NUCLEOTIDE SEQUENCE [MRNA] (ISOFORM KVB1.2)</scope>
    <scope>FUNCTION</scope>
    <scope>TISSUE SPECIFICITY</scope>
    <source>
        <tissue>Heart left ventricle</tissue>
    </source>
</reference>
<reference key="4">
    <citation type="journal article" date="1995" name="FEBS Lett.">
        <title>Alternative splicing of the human Shaker K+ channel beta 1 gene and functional expression of the beta 2 gene product.</title>
        <authorList>
            <person name="Mccormack K."/>
            <person name="McCormack T."/>
            <person name="Tanouye M.A."/>
            <person name="Rudy B."/>
            <person name="Stuehmer W."/>
        </authorList>
    </citation>
    <scope>NUCLEOTIDE SEQUENCE [MRNA] (ISOFORM KVB1.1)</scope>
    <scope>FUNCTION</scope>
    <source>
        <tissue>Hippocampus</tissue>
    </source>
</reference>
<reference key="5">
    <citation type="journal article" date="1996" name="Neuropharmacology">
        <title>Structural and functional characterization of human potassium channel subunit beta 1 (KCNA1B).</title>
        <authorList>
            <person name="Leicher T."/>
            <person name="Roeper J."/>
            <person name="Weber K."/>
            <person name="Wang X."/>
            <person name="Pongs O."/>
        </authorList>
    </citation>
    <scope>NUCLEOTIDE SEQUENCE [MRNA] (ISOFORM KVB1.1)</scope>
    <scope>ALTERNATIVE SPLICING</scope>
    <scope>FUNCTION</scope>
    <scope>TISSUE SPECIFICITY</scope>
    <source>
        <tissue>Brain cortex</tissue>
    </source>
</reference>
<reference key="6">
    <citation type="journal article" date="2004" name="Nat. Genet.">
        <title>Complete sequencing and characterization of 21,243 full-length human cDNAs.</title>
        <authorList>
            <person name="Ota T."/>
            <person name="Suzuki Y."/>
            <person name="Nishikawa T."/>
            <person name="Otsuki T."/>
            <person name="Sugiyama T."/>
            <person name="Irie R."/>
            <person name="Wakamatsu A."/>
            <person name="Hayashi K."/>
            <person name="Sato H."/>
            <person name="Nagai K."/>
            <person name="Kimura K."/>
            <person name="Makita H."/>
            <person name="Sekine M."/>
            <person name="Obayashi M."/>
            <person name="Nishi T."/>
            <person name="Shibahara T."/>
            <person name="Tanaka T."/>
            <person name="Ishii S."/>
            <person name="Yamamoto J."/>
            <person name="Saito K."/>
            <person name="Kawai Y."/>
            <person name="Isono Y."/>
            <person name="Nakamura Y."/>
            <person name="Nagahari K."/>
            <person name="Murakami K."/>
            <person name="Yasuda T."/>
            <person name="Iwayanagi T."/>
            <person name="Wagatsuma M."/>
            <person name="Shiratori A."/>
            <person name="Sudo H."/>
            <person name="Hosoiri T."/>
            <person name="Kaku Y."/>
            <person name="Kodaira H."/>
            <person name="Kondo H."/>
            <person name="Sugawara M."/>
            <person name="Takahashi M."/>
            <person name="Kanda K."/>
            <person name="Yokoi T."/>
            <person name="Furuya T."/>
            <person name="Kikkawa E."/>
            <person name="Omura Y."/>
            <person name="Abe K."/>
            <person name="Kamihara K."/>
            <person name="Katsuta N."/>
            <person name="Sato K."/>
            <person name="Tanikawa M."/>
            <person name="Yamazaki M."/>
            <person name="Ninomiya K."/>
            <person name="Ishibashi T."/>
            <person name="Yamashita H."/>
            <person name="Murakawa K."/>
            <person name="Fujimori K."/>
            <person name="Tanai H."/>
            <person name="Kimata M."/>
            <person name="Watanabe M."/>
            <person name="Hiraoka S."/>
            <person name="Chiba Y."/>
            <person name="Ishida S."/>
            <person name="Ono Y."/>
            <person name="Takiguchi S."/>
            <person name="Watanabe S."/>
            <person name="Yosida M."/>
            <person name="Hotuta T."/>
            <person name="Kusano J."/>
            <person name="Kanehori K."/>
            <person name="Takahashi-Fujii A."/>
            <person name="Hara H."/>
            <person name="Tanase T.-O."/>
            <person name="Nomura Y."/>
            <person name="Togiya S."/>
            <person name="Komai F."/>
            <person name="Hara R."/>
            <person name="Takeuchi K."/>
            <person name="Arita M."/>
            <person name="Imose N."/>
            <person name="Musashino K."/>
            <person name="Yuuki H."/>
            <person name="Oshima A."/>
            <person name="Sasaki N."/>
            <person name="Aotsuka S."/>
            <person name="Yoshikawa Y."/>
            <person name="Matsunawa H."/>
            <person name="Ichihara T."/>
            <person name="Shiohata N."/>
            <person name="Sano S."/>
            <person name="Moriya S."/>
            <person name="Momiyama H."/>
            <person name="Satoh N."/>
            <person name="Takami S."/>
            <person name="Terashima Y."/>
            <person name="Suzuki O."/>
            <person name="Nakagawa S."/>
            <person name="Senoh A."/>
            <person name="Mizoguchi H."/>
            <person name="Goto Y."/>
            <person name="Shimizu F."/>
            <person name="Wakebe H."/>
            <person name="Hishigaki H."/>
            <person name="Watanabe T."/>
            <person name="Sugiyama A."/>
            <person name="Takemoto M."/>
            <person name="Kawakami B."/>
            <person name="Yamazaki M."/>
            <person name="Watanabe K."/>
            <person name="Kumagai A."/>
            <person name="Itakura S."/>
            <person name="Fukuzumi Y."/>
            <person name="Fujimori Y."/>
            <person name="Komiyama M."/>
            <person name="Tashiro H."/>
            <person name="Tanigami A."/>
            <person name="Fujiwara T."/>
            <person name="Ono T."/>
            <person name="Yamada K."/>
            <person name="Fujii Y."/>
            <person name="Ozaki K."/>
            <person name="Hirao M."/>
            <person name="Ohmori Y."/>
            <person name="Kawabata A."/>
            <person name="Hikiji T."/>
            <person name="Kobatake N."/>
            <person name="Inagaki H."/>
            <person name="Ikema Y."/>
            <person name="Okamoto S."/>
            <person name="Okitani R."/>
            <person name="Kawakami T."/>
            <person name="Noguchi S."/>
            <person name="Itoh T."/>
            <person name="Shigeta K."/>
            <person name="Senba T."/>
            <person name="Matsumura K."/>
            <person name="Nakajima Y."/>
            <person name="Mizuno T."/>
            <person name="Morinaga M."/>
            <person name="Sasaki M."/>
            <person name="Togashi T."/>
            <person name="Oyama M."/>
            <person name="Hata H."/>
            <person name="Watanabe M."/>
            <person name="Komatsu T."/>
            <person name="Mizushima-Sugano J."/>
            <person name="Satoh T."/>
            <person name="Shirai Y."/>
            <person name="Takahashi Y."/>
            <person name="Nakagawa K."/>
            <person name="Okumura K."/>
            <person name="Nagase T."/>
            <person name="Nomura N."/>
            <person name="Kikuchi H."/>
            <person name="Masuho Y."/>
            <person name="Yamashita R."/>
            <person name="Nakai K."/>
            <person name="Yada T."/>
            <person name="Nakamura Y."/>
            <person name="Ohara O."/>
            <person name="Isogai T."/>
            <person name="Sugano S."/>
        </authorList>
    </citation>
    <scope>NUCLEOTIDE SEQUENCE [LARGE SCALE MRNA] (ISOFORMS KVB1.1; KVB1.2 AND KVB1.3)</scope>
    <source>
        <tissue>Hippocampus</tissue>
        <tissue>Thymus</tissue>
        <tissue>Trachea</tissue>
    </source>
</reference>
<reference key="7">
    <citation type="submission" date="2005-09" db="EMBL/GenBank/DDBJ databases">
        <authorList>
            <person name="Mural R.J."/>
            <person name="Istrail S."/>
            <person name="Sutton G.G."/>
            <person name="Florea L."/>
            <person name="Halpern A.L."/>
            <person name="Mobarry C.M."/>
            <person name="Lippert R."/>
            <person name="Walenz B."/>
            <person name="Shatkay H."/>
            <person name="Dew I."/>
            <person name="Miller J.R."/>
            <person name="Flanigan M.J."/>
            <person name="Edwards N.J."/>
            <person name="Bolanos R."/>
            <person name="Fasulo D."/>
            <person name="Halldorsson B.V."/>
            <person name="Hannenhalli S."/>
            <person name="Turner R."/>
            <person name="Yooseph S."/>
            <person name="Lu F."/>
            <person name="Nusskern D.R."/>
            <person name="Shue B.C."/>
            <person name="Zheng X.H."/>
            <person name="Zhong F."/>
            <person name="Delcher A.L."/>
            <person name="Huson D.H."/>
            <person name="Kravitz S.A."/>
            <person name="Mouchard L."/>
            <person name="Reinert K."/>
            <person name="Remington K.A."/>
            <person name="Clark A.G."/>
            <person name="Waterman M.S."/>
            <person name="Eichler E.E."/>
            <person name="Adams M.D."/>
            <person name="Hunkapiller M.W."/>
            <person name="Myers E.W."/>
            <person name="Venter J.C."/>
        </authorList>
    </citation>
    <scope>NUCLEOTIDE SEQUENCE [LARGE SCALE GENOMIC DNA]</scope>
</reference>
<reference key="8">
    <citation type="journal article" date="2004" name="Genome Res.">
        <title>The status, quality, and expansion of the NIH full-length cDNA project: the Mammalian Gene Collection (MGC).</title>
        <authorList>
            <consortium name="The MGC Project Team"/>
        </authorList>
    </citation>
    <scope>NUCLEOTIDE SEQUENCE [LARGE SCALE MRNA] (ISOFORM KVB1.1)</scope>
    <source>
        <tissue>Brain</tissue>
    </source>
</reference>
<reference key="9">
    <citation type="journal article" date="1995" name="J. Biol. Chem.">
        <title>A novel beta subunit increases rate of inactivation of specific voltage-gated potassium channel alpha subunits.</title>
        <authorList>
            <person name="Morales M.J."/>
            <person name="Castellino R.C."/>
            <person name="Crews A.L."/>
            <person name="Rasmusson R.L."/>
            <person name="Strauss H.C."/>
        </authorList>
    </citation>
    <scope>NUCLEOTIDE SEQUENCE [MRNA] OF 4-147 (ISOFORM KVB1.2)</scope>
    <scope>FUNCTION</scope>
    <source>
        <tissue>Heart</tissue>
    </source>
</reference>
<reference key="10">
    <citation type="journal article" date="1998" name="J. Physiol. (Lond.)">
        <title>Separable effects of human Kvbeta1.2 N- and C-termini on inactivation and expression of human Kv1.4.</title>
        <authorList>
            <person name="Accili E.A."/>
            <person name="Kuryshev Y.A."/>
            <person name="Wible B.A."/>
            <person name="Brown A.M."/>
        </authorList>
    </citation>
    <scope>FUNCTION</scope>
    <scope>DOMAIN</scope>
</reference>
<reference key="11">
    <citation type="journal article" date="2002" name="J. Neurosci.">
        <title>Episodic ataxia type 1 mutations in the human Kv1.1 potassium channel alter hKvbeta 1-induced N-type inactivation.</title>
        <authorList>
            <person name="Maylie B."/>
            <person name="Bissonnette E."/>
            <person name="Virk M."/>
            <person name="Adelman J.P."/>
            <person name="Maylie J.G."/>
        </authorList>
    </citation>
    <scope>FUNCTION</scope>
</reference>
<reference key="12">
    <citation type="journal article" date="2002" name="J. Pharmacol. Exp. Ther.">
        <title>Modulation of the human Kv1.5 channel by protein kinase C activation: role of the Kvbeta1.2 subunit.</title>
        <authorList>
            <person name="Williams C.P."/>
            <person name="Hu N."/>
            <person name="Shen W."/>
            <person name="Mashburn A.B."/>
            <person name="Murray K.T."/>
        </authorList>
    </citation>
    <scope>FUNCTION</scope>
    <scope>INTERACTION WITH KCNA5</scope>
</reference>
<reference key="13">
    <citation type="journal article" date="2004" name="Nat. Struct. Mol. Biol.">
        <title>Control of human potassium channel inactivation by editing of a small mRNA hairpin.</title>
        <authorList>
            <person name="Bhalla T."/>
            <person name="Rosenthal J.J."/>
            <person name="Holmgren M."/>
            <person name="Reenan R."/>
        </authorList>
    </citation>
    <scope>FUNCTION</scope>
</reference>
<reference key="14">
    <citation type="journal article" date="2006" name="Eur. J. Neurosci.">
        <title>Episodic ataxia type 1 mutations in the KCNA1 gene impair the fast inactivation properties of the human potassium channels Kv1.4-1.1/Kvbeta1.1 and Kv1.4-1.1/Kvbeta1.2.</title>
        <authorList>
            <person name="Imbrici P."/>
            <person name="D'Adamo M.C."/>
            <person name="Kullmann D.M."/>
            <person name="Pessia M."/>
        </authorList>
    </citation>
    <scope>FUNCTION</scope>
</reference>
<reference key="15">
    <citation type="journal article" date="2007" name="Biochem. Biophys. Res. Commun.">
        <title>NADPH binding to beta-subunit regulates inactivation of voltage-gated K(+) channels.</title>
        <authorList>
            <person name="Tipparaju S.M."/>
            <person name="Liu S.Q."/>
            <person name="Barski O.A."/>
            <person name="Bhatnagar A."/>
        </authorList>
    </citation>
    <scope>FUNCTION</scope>
    <scope>SUBCELLULAR LOCATION</scope>
    <scope>DOMAIN</scope>
    <scope>MUTAGENESIS OF TYR-307 AND ARG-316</scope>
</reference>
<reference key="16">
    <citation type="journal article" date="2009" name="Channels">
        <title>The molecular basis for the actions of Kvbeta1.2 on the opening and closing of the Kv1.2 delayed rectifier channel.</title>
        <authorList>
            <person name="Peters C.J."/>
            <person name="Vaid M."/>
            <person name="Horne A.J."/>
            <person name="Fedida D."/>
            <person name="Accili E.A."/>
        </authorList>
    </citation>
    <scope>FUNCTION</scope>
    <scope>DOMAIN</scope>
</reference>
<sequence>MLAARTGAAGSQISEENTKLRRQSGFSVAGKDKSPKKASENAKDSSLSPSGESQLRARQLALLREVEMNWYLKLCDLSSEHTTVCTTGMPHRNLGKSGLRVSCLGLGTWVTFGGQISDEVAERLMTIAYESGVNLFDTAEVYAAGKAEVILGSIIKKKGWRRSSLVITTKLYWGGKAETERGLSRKHIIEGLKGSLQRLQLEYVDVVFANRPDSNTPMEEIVRAMTHVINQGMAMYWGTSRWSAMEIMEAYSVARQFNMIPPVCEQAEYHLFQREKVEVQLPELYHKIGVGAMTWSPLACGIISGKYGNGVPESSRASLKCYQWLKERIVSEEGRKQQNKLKDLSPIAERLGCTLPQLAVAWCLRNEGVSSVLLGSSTPEQLIENLGAIQVLPKMTSHVVNEIDNILRNKPYSKKDYRS</sequence>
<organism>
    <name type="scientific">Homo sapiens</name>
    <name type="common">Human</name>
    <dbReference type="NCBI Taxonomy" id="9606"/>
    <lineage>
        <taxon>Eukaryota</taxon>
        <taxon>Metazoa</taxon>
        <taxon>Chordata</taxon>
        <taxon>Craniata</taxon>
        <taxon>Vertebrata</taxon>
        <taxon>Euteleostomi</taxon>
        <taxon>Mammalia</taxon>
        <taxon>Eutheria</taxon>
        <taxon>Euarchontoglires</taxon>
        <taxon>Primates</taxon>
        <taxon>Haplorrhini</taxon>
        <taxon>Catarrhini</taxon>
        <taxon>Hominidae</taxon>
        <taxon>Homo</taxon>
    </lineage>
</organism>
<dbReference type="EC" id="1.1.1.-" evidence="2"/>
<dbReference type="EMBL" id="L47665">
    <property type="protein sequence ID" value="AAC41926.1"/>
    <property type="molecule type" value="mRNA"/>
</dbReference>
<dbReference type="EMBL" id="U16953">
    <property type="protein sequence ID" value="AAC50122.1"/>
    <property type="molecule type" value="mRNA"/>
</dbReference>
<dbReference type="EMBL" id="L39833">
    <property type="protein sequence ID" value="AAC37573.1"/>
    <property type="molecule type" value="mRNA"/>
</dbReference>
<dbReference type="EMBL" id="U33428">
    <property type="protein sequence ID" value="AAC50953.1"/>
    <property type="molecule type" value="mRNA"/>
</dbReference>
<dbReference type="EMBL" id="X83127">
    <property type="protein sequence ID" value="CAA58208.1"/>
    <property type="molecule type" value="mRNA"/>
</dbReference>
<dbReference type="EMBL" id="AK057059">
    <property type="protein sequence ID" value="BAG51856.1"/>
    <property type="molecule type" value="mRNA"/>
</dbReference>
<dbReference type="EMBL" id="AK127240">
    <property type="protein sequence ID" value="BAG54461.1"/>
    <property type="molecule type" value="mRNA"/>
</dbReference>
<dbReference type="EMBL" id="AK292693">
    <property type="protein sequence ID" value="BAF85382.1"/>
    <property type="molecule type" value="mRNA"/>
</dbReference>
<dbReference type="EMBL" id="AK292999">
    <property type="protein sequence ID" value="BAF85688.1"/>
    <property type="molecule type" value="mRNA"/>
</dbReference>
<dbReference type="EMBL" id="CH471052">
    <property type="protein sequence ID" value="EAW78732.1"/>
    <property type="molecule type" value="Genomic_DNA"/>
</dbReference>
<dbReference type="EMBL" id="CH471052">
    <property type="protein sequence ID" value="EAW78733.1"/>
    <property type="molecule type" value="Genomic_DNA"/>
</dbReference>
<dbReference type="EMBL" id="CH471052">
    <property type="protein sequence ID" value="EAW78734.1"/>
    <property type="molecule type" value="Genomic_DNA"/>
</dbReference>
<dbReference type="EMBL" id="BC043166">
    <property type="protein sequence ID" value="AAH43166.1"/>
    <property type="molecule type" value="mRNA"/>
</dbReference>
<dbReference type="EMBL" id="U17968">
    <property type="protein sequence ID" value="AAC50113.1"/>
    <property type="molecule type" value="mRNA"/>
</dbReference>
<dbReference type="CCDS" id="CCDS3174.1">
    <molecule id="Q14722-1"/>
</dbReference>
<dbReference type="CCDS" id="CCDS3175.1">
    <molecule id="Q14722-3"/>
</dbReference>
<dbReference type="CCDS" id="CCDS33882.1">
    <molecule id="Q14722-2"/>
</dbReference>
<dbReference type="PIR" id="I55463">
    <property type="entry name" value="I55463"/>
</dbReference>
<dbReference type="PIR" id="I59393">
    <property type="entry name" value="I59393"/>
</dbReference>
<dbReference type="RefSeq" id="NP_001295146.1">
    <property type="nucleotide sequence ID" value="NM_001308217.1"/>
</dbReference>
<dbReference type="RefSeq" id="NP_001295151.1">
    <property type="nucleotide sequence ID" value="NM_001308222.1"/>
</dbReference>
<dbReference type="RefSeq" id="NP_003462.2">
    <molecule id="Q14722-3"/>
    <property type="nucleotide sequence ID" value="NM_003471.3"/>
</dbReference>
<dbReference type="RefSeq" id="NP_751891.1">
    <molecule id="Q14722-2"/>
    <property type="nucleotide sequence ID" value="NM_172159.3"/>
</dbReference>
<dbReference type="RefSeq" id="NP_751892.1">
    <molecule id="Q14722-1"/>
    <property type="nucleotide sequence ID" value="NM_172160.3"/>
</dbReference>
<dbReference type="SMR" id="Q14722"/>
<dbReference type="BioGRID" id="113626">
    <property type="interactions" value="14"/>
</dbReference>
<dbReference type="CORUM" id="Q14722"/>
<dbReference type="FunCoup" id="Q14722">
    <property type="interactions" value="179"/>
</dbReference>
<dbReference type="IntAct" id="Q14722">
    <property type="interactions" value="5"/>
</dbReference>
<dbReference type="STRING" id="9606.ENSP00000419952"/>
<dbReference type="ChEMBL" id="CHEMBL5884"/>
<dbReference type="DrugBank" id="DB00228">
    <property type="generic name" value="Enflurane"/>
</dbReference>
<dbReference type="DrugBank" id="DB01110">
    <property type="generic name" value="Miconazole"/>
</dbReference>
<dbReference type="DrugBank" id="DB01069">
    <property type="generic name" value="Promethazine"/>
</dbReference>
<dbReference type="TCDB" id="8.A.5.1.1">
    <property type="family name" value="the voltage-gated k(+) channel Beta-subunit (kvBeta) family"/>
</dbReference>
<dbReference type="iPTMnet" id="Q14722"/>
<dbReference type="PhosphoSitePlus" id="Q14722"/>
<dbReference type="BioMuta" id="KCNAB1"/>
<dbReference type="DMDM" id="18202500"/>
<dbReference type="jPOST" id="Q14722"/>
<dbReference type="MassIVE" id="Q14722"/>
<dbReference type="PaxDb" id="9606-ENSP00000419952"/>
<dbReference type="PeptideAtlas" id="Q14722"/>
<dbReference type="ProteomicsDB" id="60145">
    <molecule id="Q14722-1"/>
</dbReference>
<dbReference type="ProteomicsDB" id="60146">
    <molecule id="Q14722-2"/>
</dbReference>
<dbReference type="ProteomicsDB" id="60147">
    <molecule id="Q14722-3"/>
</dbReference>
<dbReference type="ABCD" id="Q14722">
    <property type="antibodies" value="4 sequenced antibodies"/>
</dbReference>
<dbReference type="Antibodypedia" id="18386">
    <property type="antibodies" value="433 antibodies from 34 providers"/>
</dbReference>
<dbReference type="DNASU" id="7881"/>
<dbReference type="Ensembl" id="ENST00000302490.12">
    <molecule id="Q14722-2"/>
    <property type="protein sequence ID" value="ENSP00000305858.8"/>
    <property type="gene ID" value="ENSG00000169282.19"/>
</dbReference>
<dbReference type="Ensembl" id="ENST00000471742.5">
    <molecule id="Q14722-3"/>
    <property type="protein sequence ID" value="ENSP00000418956.1"/>
    <property type="gene ID" value="ENSG00000169282.19"/>
</dbReference>
<dbReference type="Ensembl" id="ENST00000490337.6">
    <molecule id="Q14722-1"/>
    <property type="protein sequence ID" value="ENSP00000419952.1"/>
    <property type="gene ID" value="ENSG00000169282.19"/>
</dbReference>
<dbReference type="GeneID" id="7881"/>
<dbReference type="KEGG" id="hsa:7881"/>
<dbReference type="MANE-Select" id="ENST00000490337.6">
    <property type="protein sequence ID" value="ENSP00000419952.1"/>
    <property type="RefSeq nucleotide sequence ID" value="NM_172160.3"/>
    <property type="RefSeq protein sequence ID" value="NP_751892.1"/>
</dbReference>
<dbReference type="UCSC" id="uc003far.3">
    <molecule id="Q14722-1"/>
    <property type="organism name" value="human"/>
</dbReference>
<dbReference type="AGR" id="HGNC:6228"/>
<dbReference type="CTD" id="7881"/>
<dbReference type="DisGeNET" id="7881"/>
<dbReference type="GeneCards" id="KCNAB1"/>
<dbReference type="HGNC" id="HGNC:6228">
    <property type="gene designation" value="KCNAB1"/>
</dbReference>
<dbReference type="HPA" id="ENSG00000169282">
    <property type="expression patterns" value="Tissue enhanced (brain)"/>
</dbReference>
<dbReference type="MalaCards" id="KCNAB1"/>
<dbReference type="MIM" id="601141">
    <property type="type" value="gene"/>
</dbReference>
<dbReference type="neXtProt" id="NX_Q14722"/>
<dbReference type="OpenTargets" id="ENSG00000169282"/>
<dbReference type="PharmGKB" id="PA370"/>
<dbReference type="VEuPathDB" id="HostDB:ENSG00000169282"/>
<dbReference type="eggNOG" id="KOG1575">
    <property type="taxonomic scope" value="Eukaryota"/>
</dbReference>
<dbReference type="GeneTree" id="ENSGT00940000156760"/>
<dbReference type="HOGENOM" id="CLU_023205_2_0_1"/>
<dbReference type="InParanoid" id="Q14722"/>
<dbReference type="OMA" id="MWAGPYG"/>
<dbReference type="OrthoDB" id="1720422at2759"/>
<dbReference type="PAN-GO" id="Q14722">
    <property type="GO annotations" value="7 GO annotations based on evolutionary models"/>
</dbReference>
<dbReference type="PhylomeDB" id="Q14722"/>
<dbReference type="TreeFam" id="TF324563"/>
<dbReference type="PathwayCommons" id="Q14722"/>
<dbReference type="Reactome" id="R-HSA-1296072">
    <property type="pathway name" value="Voltage gated Potassium channels"/>
</dbReference>
<dbReference type="SignaLink" id="Q14722"/>
<dbReference type="BioGRID-ORCS" id="7881">
    <property type="hits" value="8 hits in 1146 CRISPR screens"/>
</dbReference>
<dbReference type="ChiTaRS" id="KCNAB1">
    <property type="organism name" value="human"/>
</dbReference>
<dbReference type="GeneWiki" id="KCNAB1"/>
<dbReference type="GenomeRNAi" id="7881"/>
<dbReference type="Pharos" id="Q14722">
    <property type="development level" value="Tbio"/>
</dbReference>
<dbReference type="PRO" id="PR:Q14722"/>
<dbReference type="Proteomes" id="UP000005640">
    <property type="component" value="Chromosome 3"/>
</dbReference>
<dbReference type="RNAct" id="Q14722">
    <property type="molecule type" value="protein"/>
</dbReference>
<dbReference type="Bgee" id="ENSG00000169282">
    <property type="expression patterns" value="Expressed in blood vessel layer and 189 other cell types or tissues"/>
</dbReference>
<dbReference type="ExpressionAtlas" id="Q14722">
    <property type="expression patterns" value="baseline and differential"/>
</dbReference>
<dbReference type="GO" id="GO:0009898">
    <property type="term" value="C:cytoplasmic side of plasma membrane"/>
    <property type="evidence" value="ECO:0000314"/>
    <property type="project" value="UniProtKB"/>
</dbReference>
<dbReference type="GO" id="GO:0005829">
    <property type="term" value="C:cytosol"/>
    <property type="evidence" value="ECO:0000314"/>
    <property type="project" value="UniProtKB"/>
</dbReference>
<dbReference type="GO" id="GO:0044224">
    <property type="term" value="C:juxtaparanode region of axon"/>
    <property type="evidence" value="ECO:0000318"/>
    <property type="project" value="GO_Central"/>
</dbReference>
<dbReference type="GO" id="GO:0005886">
    <property type="term" value="C:plasma membrane"/>
    <property type="evidence" value="ECO:0000304"/>
    <property type="project" value="Reactome"/>
</dbReference>
<dbReference type="GO" id="GO:0034705">
    <property type="term" value="C:potassium channel complex"/>
    <property type="evidence" value="ECO:0000314"/>
    <property type="project" value="UniProtKB"/>
</dbReference>
<dbReference type="GO" id="GO:0008076">
    <property type="term" value="C:voltage-gated potassium channel complex"/>
    <property type="evidence" value="ECO:0000315"/>
    <property type="project" value="CAFA"/>
</dbReference>
<dbReference type="GO" id="GO:0004033">
    <property type="term" value="F:aldo-keto reductase (NADPH) activity"/>
    <property type="evidence" value="ECO:0000250"/>
    <property type="project" value="UniProtKB"/>
</dbReference>
<dbReference type="GO" id="GO:0004090">
    <property type="term" value="F:carbonyl reductase (NADPH) activity"/>
    <property type="evidence" value="ECO:0007669"/>
    <property type="project" value="RHEA"/>
</dbReference>
<dbReference type="GO" id="GO:0140678">
    <property type="term" value="F:molecular function inhibitor activity"/>
    <property type="evidence" value="ECO:0000314"/>
    <property type="project" value="DisProt"/>
</dbReference>
<dbReference type="GO" id="GO:0070402">
    <property type="term" value="F:NADPH binding"/>
    <property type="evidence" value="ECO:0000314"/>
    <property type="project" value="UniProtKB"/>
</dbReference>
<dbReference type="GO" id="GO:0015459">
    <property type="term" value="F:potassium channel regulator activity"/>
    <property type="evidence" value="ECO:0000314"/>
    <property type="project" value="UniProtKB"/>
</dbReference>
<dbReference type="GO" id="GO:0019904">
    <property type="term" value="F:protein domain specific binding"/>
    <property type="evidence" value="ECO:0000353"/>
    <property type="project" value="CAFA"/>
</dbReference>
<dbReference type="GO" id="GO:0044325">
    <property type="term" value="F:transmembrane transporter binding"/>
    <property type="evidence" value="ECO:0000318"/>
    <property type="project" value="GO_Central"/>
</dbReference>
<dbReference type="GO" id="GO:0005249">
    <property type="term" value="F:voltage-gated potassium channel activity"/>
    <property type="evidence" value="ECO:0007669"/>
    <property type="project" value="InterPro"/>
</dbReference>
<dbReference type="GO" id="GO:0007611">
    <property type="term" value="P:learning or memory"/>
    <property type="evidence" value="ECO:0007669"/>
    <property type="project" value="Ensembl"/>
</dbReference>
<dbReference type="GO" id="GO:1903817">
    <property type="term" value="P:negative regulation of voltage-gated potassium channel activity"/>
    <property type="evidence" value="ECO:0000315"/>
    <property type="project" value="CAFA"/>
</dbReference>
<dbReference type="GO" id="GO:0006813">
    <property type="term" value="P:potassium ion transport"/>
    <property type="evidence" value="ECO:0000304"/>
    <property type="project" value="ProtInc"/>
</dbReference>
<dbReference type="GO" id="GO:1902259">
    <property type="term" value="P:regulation of delayed rectifier potassium channel activity"/>
    <property type="evidence" value="ECO:0000250"/>
    <property type="project" value="UniProtKB"/>
</dbReference>
<dbReference type="GO" id="GO:1901379">
    <property type="term" value="P:regulation of potassium ion transmembrane transport"/>
    <property type="evidence" value="ECO:0000314"/>
    <property type="project" value="UniProtKB"/>
</dbReference>
<dbReference type="CDD" id="cd19159">
    <property type="entry name" value="AKR_KCAB1B_AKR6A3-like"/>
    <property type="match status" value="1"/>
</dbReference>
<dbReference type="DisProt" id="DP00090"/>
<dbReference type="FunFam" id="3.20.20.100:FF:000001">
    <property type="entry name" value="voltage-gated potassium channel subunit beta-2 isoform X2"/>
    <property type="match status" value="1"/>
</dbReference>
<dbReference type="Gene3D" id="3.20.20.100">
    <property type="entry name" value="NADP-dependent oxidoreductase domain"/>
    <property type="match status" value="1"/>
</dbReference>
<dbReference type="InterPro" id="IPR005983">
    <property type="entry name" value="K_chnl_volt-dep_bsu_KCNAB"/>
</dbReference>
<dbReference type="InterPro" id="IPR005399">
    <property type="entry name" value="K_chnl_volt-dep_bsu_KCNAB-rel"/>
</dbReference>
<dbReference type="InterPro" id="IPR005400">
    <property type="entry name" value="K_chnl_volt-dep_bsu_KCNAB1"/>
</dbReference>
<dbReference type="InterPro" id="IPR023210">
    <property type="entry name" value="NADP_OxRdtase_dom"/>
</dbReference>
<dbReference type="InterPro" id="IPR036812">
    <property type="entry name" value="NADP_OxRdtase_dom_sf"/>
</dbReference>
<dbReference type="NCBIfam" id="TIGR01293">
    <property type="entry name" value="Kv_beta"/>
    <property type="match status" value="1"/>
</dbReference>
<dbReference type="PANTHER" id="PTHR43150">
    <property type="entry name" value="HYPERKINETIC, ISOFORM M"/>
    <property type="match status" value="1"/>
</dbReference>
<dbReference type="PANTHER" id="PTHR43150:SF7">
    <property type="entry name" value="VOLTAGE-GATED POTASSIUM CHANNEL SUBUNIT BETA-1"/>
    <property type="match status" value="1"/>
</dbReference>
<dbReference type="Pfam" id="PF00248">
    <property type="entry name" value="Aldo_ket_red"/>
    <property type="match status" value="1"/>
</dbReference>
<dbReference type="PRINTS" id="PR01578">
    <property type="entry name" value="KCNAB1CHANEL"/>
</dbReference>
<dbReference type="PRINTS" id="PR01577">
    <property type="entry name" value="KCNABCHANNEL"/>
</dbReference>
<dbReference type="SUPFAM" id="SSF51430">
    <property type="entry name" value="NAD(P)-linked oxidoreductase"/>
    <property type="match status" value="1"/>
</dbReference>
<accession>Q14722</accession>
<accession>A8K9H8</accession>
<accession>A8KAD4</accession>
<accession>B3KPZ4</accession>
<accession>Q13031</accession>
<accession>Q13302</accession>
<accession>Q16547</accession>
<accession>Q6PI60</accession>
<accession>Q99869</accession>
<feature type="chain" id="PRO_0000148739" description="Voltage-gated potassium channel subunit beta-1">
    <location>
        <begin position="1"/>
        <end position="419"/>
    </location>
</feature>
<feature type="region of interest" description="Disordered" evidence="3">
    <location>
        <begin position="1"/>
        <end position="52"/>
    </location>
</feature>
<feature type="compositionally biased region" description="Basic and acidic residues" evidence="3">
    <location>
        <begin position="30"/>
        <end position="43"/>
    </location>
</feature>
<feature type="active site" description="Proton donor/acceptor" evidence="1">
    <location>
        <position position="142"/>
    </location>
</feature>
<feature type="binding site" evidence="1">
    <location>
        <position position="108"/>
    </location>
    <ligand>
        <name>NADP(+)</name>
        <dbReference type="ChEBI" id="CHEBI:58349"/>
    </ligand>
</feature>
<feature type="binding site" evidence="1">
    <location>
        <position position="109"/>
    </location>
    <ligand>
        <name>NADP(+)</name>
        <dbReference type="ChEBI" id="CHEBI:58349"/>
    </ligand>
</feature>
<feature type="binding site" evidence="1">
    <location>
        <position position="115"/>
    </location>
    <ligand>
        <name>NADP(+)</name>
        <dbReference type="ChEBI" id="CHEBI:58349"/>
    </ligand>
</feature>
<feature type="binding site" evidence="1">
    <location>
        <position position="137"/>
    </location>
    <ligand>
        <name>NADP(+)</name>
        <dbReference type="ChEBI" id="CHEBI:58349"/>
    </ligand>
</feature>
<feature type="binding site" evidence="1">
    <location>
        <position position="210"/>
    </location>
    <ligand>
        <name>NADP(+)</name>
        <dbReference type="ChEBI" id="CHEBI:58349"/>
    </ligand>
</feature>
<feature type="binding site" evidence="1">
    <location>
        <position position="240"/>
    </location>
    <ligand>
        <name>NADP(+)</name>
        <dbReference type="ChEBI" id="CHEBI:58349"/>
    </ligand>
</feature>
<feature type="binding site" evidence="1">
    <location>
        <position position="241"/>
    </location>
    <ligand>
        <name>NADP(+)</name>
        <dbReference type="ChEBI" id="CHEBI:58349"/>
    </ligand>
</feature>
<feature type="binding site" evidence="1">
    <location>
        <position position="266"/>
    </location>
    <ligand>
        <name>NADP(+)</name>
        <dbReference type="ChEBI" id="CHEBI:58349"/>
    </ligand>
</feature>
<feature type="binding site" evidence="1">
    <location>
        <position position="295"/>
    </location>
    <ligand>
        <name>NADP(+)</name>
        <dbReference type="ChEBI" id="CHEBI:58349"/>
    </ligand>
</feature>
<feature type="binding site" evidence="1">
    <location>
        <position position="296"/>
    </location>
    <ligand>
        <name>NADP(+)</name>
        <dbReference type="ChEBI" id="CHEBI:58349"/>
    </ligand>
</feature>
<feature type="binding site" evidence="1">
    <location>
        <position position="297"/>
    </location>
    <ligand>
        <name>NADP(+)</name>
        <dbReference type="ChEBI" id="CHEBI:58349"/>
    </ligand>
</feature>
<feature type="binding site" evidence="1">
    <location>
        <position position="298"/>
    </location>
    <ligand>
        <name>NADP(+)</name>
        <dbReference type="ChEBI" id="CHEBI:58349"/>
    </ligand>
</feature>
<feature type="binding site" evidence="1">
    <location>
        <position position="299"/>
    </location>
    <ligand>
        <name>NADP(+)</name>
        <dbReference type="ChEBI" id="CHEBI:58349"/>
    </ligand>
</feature>
<feature type="binding site" evidence="1">
    <location>
        <position position="300"/>
    </location>
    <ligand>
        <name>NADP(+)</name>
        <dbReference type="ChEBI" id="CHEBI:58349"/>
    </ligand>
</feature>
<feature type="binding site" evidence="1">
    <location>
        <position position="306"/>
    </location>
    <ligand>
        <name>NADP(+)</name>
        <dbReference type="ChEBI" id="CHEBI:58349"/>
    </ligand>
</feature>
<feature type="binding site" evidence="1">
    <location>
        <position position="316"/>
    </location>
    <ligand>
        <name>NADP(+)</name>
        <dbReference type="ChEBI" id="CHEBI:58349"/>
    </ligand>
</feature>
<feature type="binding site" evidence="1">
    <location>
        <position position="375"/>
    </location>
    <ligand>
        <name>NADP(+)</name>
        <dbReference type="ChEBI" id="CHEBI:58349"/>
    </ligand>
</feature>
<feature type="binding site" evidence="1">
    <location>
        <position position="377"/>
    </location>
    <ligand>
        <name>NADP(+)</name>
        <dbReference type="ChEBI" id="CHEBI:58349"/>
    </ligand>
</feature>
<feature type="binding site" evidence="1">
    <location>
        <position position="381"/>
    </location>
    <ligand>
        <name>NADP(+)</name>
        <dbReference type="ChEBI" id="CHEBI:58349"/>
    </ligand>
</feature>
<feature type="binding site" evidence="1">
    <location>
        <position position="384"/>
    </location>
    <ligand>
        <name>NADP(+)</name>
        <dbReference type="ChEBI" id="CHEBI:58349"/>
    </ligand>
</feature>
<feature type="binding site" evidence="1">
    <location>
        <position position="385"/>
    </location>
    <ligand>
        <name>NADP(+)</name>
        <dbReference type="ChEBI" id="CHEBI:58349"/>
    </ligand>
</feature>
<feature type="splice variant" id="VSP_001051" description="In isoform KvB1.1." evidence="17 18 20 23">
    <original>MLAARTGAAGSQISEENTKLRRQSGFSVAGKDKSPKKASENAKDSSLSPSGESQLRARQLALLREVEMNWYLKLCDLSSEHTTVCTTGMPH</original>
    <variation>MQVSIACTEHNLKSRNGEDRLLSKQSSTAPNVVNAARAKFRTVAIIARSLGTFTPQHHISLKESTAKQTGMKY</variation>
    <location>
        <begin position="1"/>
        <end position="91"/>
    </location>
</feature>
<feature type="splice variant" id="VSP_001050" description="In isoform KvB1.2." evidence="17 19 21 22">
    <original>MLAARTGAAGSQISEENTKLRRQSGFSVAGKDKSPKKASENAKDSSLSPSGESQLRARQLALLREVEMNWYLKLCDLSSEHTTVCTTGMPH</original>
    <variation>MHLYKPACADIPSPKLGLPKSSESALKCRWHLAVTKTQPQAACKPVRPSGAAEQKYVEKFLRVHGISLQETTRAETGMAY</variation>
    <location>
        <begin position="1"/>
        <end position="91"/>
    </location>
</feature>
<feature type="mutagenesis site" description="Reduces affinity for NADPH." evidence="8">
    <original>Y</original>
    <variation>F</variation>
    <location>
        <position position="307"/>
    </location>
</feature>
<feature type="mutagenesis site" description="Nearly abolishes NADPH binding." evidence="8">
    <original>R</original>
    <variation>E</variation>
    <location>
        <position position="316"/>
    </location>
</feature>
<feature type="sequence conflict" description="In Ref. 5; CAA58208." evidence="24" ref="5">
    <original>V</original>
    <variation>L</variation>
    <location>
        <position position="290"/>
    </location>
</feature>
<feature type="sequence conflict" description="In Ref. 9; AAC50113." evidence="24" ref="9">
    <original>L</original>
    <variation>S</variation>
    <location sequence="Q14722-3">
        <position position="16"/>
    </location>
</feature>
<comment type="function">
    <text evidence="2 4 5 6 7 8 9 10 11 12 14 16">Regulatory subunit of the voltage-gated potassium (Kv) Shaker channels composed of pore-forming and potassium-conducting alpha subunits and of regulatory beta subunits (PubMed:17156368, PubMed:17540341, PubMed:19713757, PubMed:7499366, PubMed:7603988). The beta-1/KCNAB1 cytoplasmic subunit mediates closure of delayed rectifier potassium channels by physically obstructing the pore via its N-terminal domain and increases the speed of channel closure for other family members (PubMed:9763623). Promotes the inactivation of Kv1.1/KCNA1, Kv1.2/KCNA2, Kv1.4/KCNA4, Kv1.5/KCNA5 and Kv1.6/KCNA6 alpha subunit-containing channels (PubMed:12077175, PubMed:12130714, PubMed:15361858, PubMed:17156368, PubMed:17540341, PubMed:19713757, PubMed:7499366, PubMed:7603988, PubMed:7649300, PubMed:7890764, PubMed:9763623). Displays nicotinamide adenine dinucleotide phosphate (NADPH)-dependent aldoketoreductase activity by catalyzing the NADPH-dependent reduction of a variety of endogenous aldehydes and ketones (By similarity). The binding of NADPH is required for efficient down-regulation of potassium channel activity (PubMed:17540341). Oxidation of the bound NADPH restrains N-terminal domain from blocking the channel, thereby decreasing N-type inactivation of potassium channel activity (By similarity).</text>
</comment>
<comment type="function">
    <molecule>Isoform KvB1.2</molecule>
    <text evidence="13 14">Isoform KvB1.2 shows no effect on KCNA1, KCNA2 or KCNB1.</text>
</comment>
<comment type="catalytic activity">
    <reaction evidence="2">
        <text>a primary alcohol + NADP(+) = an aldehyde + NADPH + H(+)</text>
        <dbReference type="Rhea" id="RHEA:15937"/>
        <dbReference type="ChEBI" id="CHEBI:15378"/>
        <dbReference type="ChEBI" id="CHEBI:15734"/>
        <dbReference type="ChEBI" id="CHEBI:17478"/>
        <dbReference type="ChEBI" id="CHEBI:57783"/>
        <dbReference type="ChEBI" id="CHEBI:58349"/>
    </reaction>
    <physiologicalReaction direction="right-to-left" evidence="2">
        <dbReference type="Rhea" id="RHEA:15939"/>
    </physiologicalReaction>
</comment>
<comment type="catalytic activity">
    <reaction evidence="2">
        <text>a secondary alcohol + NADP(+) = a ketone + NADPH + H(+)</text>
        <dbReference type="Rhea" id="RHEA:19257"/>
        <dbReference type="ChEBI" id="CHEBI:15378"/>
        <dbReference type="ChEBI" id="CHEBI:17087"/>
        <dbReference type="ChEBI" id="CHEBI:35681"/>
        <dbReference type="ChEBI" id="CHEBI:57783"/>
        <dbReference type="ChEBI" id="CHEBI:58349"/>
    </reaction>
    <physiologicalReaction direction="right-to-left" evidence="2">
        <dbReference type="Rhea" id="RHEA:19259"/>
    </physiologicalReaction>
</comment>
<comment type="subunit">
    <text evidence="2 5 16 24">Homotetramer (By similarity). Interaction with tetrameric potassium channel alpha subunits gives rise to a heterooctamer (Probable). Identified in potassium channel complexes containing KCNA1, KCNA2, KCNA4, KCNA5, KCNA6, KCNAB1 and KCNAB2 (PubMed:12130714, PubMed:9763623). Part of a complex containing KCNA1, KCNA4 and LGI1; interaction with LGI1 inhibits down-regulation of KCNA1 channel activity. Interacts with the dimer formed by GNB1 and GNG2; this enhances KCNA1 binding. Interacts with SQSTM1 (By similarity).</text>
</comment>
<comment type="subcellular location">
    <subcellularLocation>
        <location evidence="8">Cytoplasm</location>
    </subcellularLocation>
    <subcellularLocation>
        <location evidence="2">Membrane</location>
        <topology evidence="24">Peripheral membrane protein</topology>
        <orientation evidence="24">Cytoplasmic side</orientation>
    </subcellularLocation>
    <subcellularLocation>
        <location evidence="8">Cell membrane</location>
        <topology evidence="8">Peripheral membrane protein</topology>
        <orientation evidence="8">Cytoplasmic side</orientation>
    </subcellularLocation>
    <text evidence="8">Recruited to the cytoplasmic side of the cell membrane via its interaction with pore-forming potassium channel alpha subunits.</text>
</comment>
<comment type="alternative products">
    <event type="alternative splicing"/>
    <isoform>
        <id>Q14722-1</id>
        <name>KvB1.3</name>
        <sequence type="displayed"/>
    </isoform>
    <isoform>
        <id>Q14722-2</id>
        <name>KvB1.1</name>
        <sequence type="described" ref="VSP_001051"/>
    </isoform>
    <isoform>
        <id>Q14722-3</id>
        <name>KvB1.2</name>
        <sequence type="described" ref="VSP_001050"/>
    </isoform>
</comment>
<comment type="tissue specificity">
    <text evidence="11 15">In brain, expression is most prominent in caudate nucleus, hippocampus and thalamus. Significant expression also detected in amygdala and subthalamic nucleus. Also expressed in both healthy and cardiomyopathic heart. Up to four times more abundant in left ventricle than left atrium.</text>
</comment>
<comment type="domain">
    <text evidence="9 16">The N-terminal domain of the beta subunit mediates closure of delayed rectifier potassium channels by physically obstructing the pore.</text>
</comment>
<comment type="similarity">
    <text evidence="24">Belongs to the shaker potassium channel beta subunit family.</text>
</comment>
<name>KCAB1_HUMAN</name>
<keyword id="KW-0025">Alternative splicing</keyword>
<keyword id="KW-1003">Cell membrane</keyword>
<keyword id="KW-0963">Cytoplasm</keyword>
<keyword id="KW-0406">Ion transport</keyword>
<keyword id="KW-0472">Membrane</keyword>
<keyword id="KW-0521">NADP</keyword>
<keyword id="KW-0560">Oxidoreductase</keyword>
<keyword id="KW-0630">Potassium</keyword>
<keyword id="KW-0633">Potassium transport</keyword>
<keyword id="KW-1267">Proteomics identification</keyword>
<keyword id="KW-1185">Reference proteome</keyword>
<keyword id="KW-0813">Transport</keyword>
<protein>
    <recommendedName>
        <fullName>Voltage-gated potassium channel subunit beta-1</fullName>
        <ecNumber evidence="2">1.1.1.-</ecNumber>
    </recommendedName>
    <alternativeName>
        <fullName>K(+) channel subunit beta-1</fullName>
    </alternativeName>
    <alternativeName>
        <fullName>Kv-beta-1</fullName>
    </alternativeName>
</protein>